<feature type="chain" id="PRO_1000045015" description="Probable Fe(2+)-trafficking protein">
    <location>
        <begin position="1"/>
        <end position="88"/>
    </location>
</feature>
<accession>Q0A551</accession>
<comment type="function">
    <text evidence="1">Could be a mediator in iron transactions between iron acquisition and iron-requiring processes, such as synthesis and/or repair of Fe-S clusters in biosynthetic enzymes.</text>
</comment>
<comment type="similarity">
    <text evidence="1">Belongs to the Fe(2+)-trafficking protein family.</text>
</comment>
<evidence type="ECO:0000255" key="1">
    <source>
        <dbReference type="HAMAP-Rule" id="MF_00686"/>
    </source>
</evidence>
<keyword id="KW-0408">Iron</keyword>
<keyword id="KW-1185">Reference proteome</keyword>
<protein>
    <recommendedName>
        <fullName evidence="1">Probable Fe(2+)-trafficking protein</fullName>
    </recommendedName>
</protein>
<dbReference type="EMBL" id="CP000453">
    <property type="protein sequence ID" value="ABI58036.1"/>
    <property type="molecule type" value="Genomic_DNA"/>
</dbReference>
<dbReference type="RefSeq" id="WP_011630429.1">
    <property type="nucleotide sequence ID" value="NC_008340.1"/>
</dbReference>
<dbReference type="SMR" id="Q0A551"/>
<dbReference type="KEGG" id="aeh:Mlg_2696"/>
<dbReference type="eggNOG" id="COG2924">
    <property type="taxonomic scope" value="Bacteria"/>
</dbReference>
<dbReference type="HOGENOM" id="CLU_170994_0_0_6"/>
<dbReference type="OrthoDB" id="9804318at2"/>
<dbReference type="Proteomes" id="UP000001962">
    <property type="component" value="Chromosome"/>
</dbReference>
<dbReference type="GO" id="GO:0005829">
    <property type="term" value="C:cytosol"/>
    <property type="evidence" value="ECO:0007669"/>
    <property type="project" value="TreeGrafter"/>
</dbReference>
<dbReference type="GO" id="GO:0005506">
    <property type="term" value="F:iron ion binding"/>
    <property type="evidence" value="ECO:0007669"/>
    <property type="project" value="UniProtKB-UniRule"/>
</dbReference>
<dbReference type="GO" id="GO:0034599">
    <property type="term" value="P:cellular response to oxidative stress"/>
    <property type="evidence" value="ECO:0007669"/>
    <property type="project" value="TreeGrafter"/>
</dbReference>
<dbReference type="FunFam" id="1.10.3880.10:FF:000001">
    <property type="entry name" value="Probable Fe(2+)-trafficking protein"/>
    <property type="match status" value="1"/>
</dbReference>
<dbReference type="Gene3D" id="1.10.3880.10">
    <property type="entry name" value="Fe(II) trafficking protein YggX"/>
    <property type="match status" value="1"/>
</dbReference>
<dbReference type="HAMAP" id="MF_00686">
    <property type="entry name" value="Fe_traffic_YggX"/>
    <property type="match status" value="1"/>
</dbReference>
<dbReference type="InterPro" id="IPR007457">
    <property type="entry name" value="Fe_traffick_prot_YggX"/>
</dbReference>
<dbReference type="InterPro" id="IPR036766">
    <property type="entry name" value="Fe_traffick_prot_YggX_sf"/>
</dbReference>
<dbReference type="NCBIfam" id="NF003817">
    <property type="entry name" value="PRK05408.1"/>
    <property type="match status" value="1"/>
</dbReference>
<dbReference type="PANTHER" id="PTHR36965">
    <property type="entry name" value="FE(2+)-TRAFFICKING PROTEIN-RELATED"/>
    <property type="match status" value="1"/>
</dbReference>
<dbReference type="PANTHER" id="PTHR36965:SF1">
    <property type="entry name" value="FE(2+)-TRAFFICKING PROTEIN-RELATED"/>
    <property type="match status" value="1"/>
</dbReference>
<dbReference type="Pfam" id="PF04362">
    <property type="entry name" value="Iron_traffic"/>
    <property type="match status" value="1"/>
</dbReference>
<dbReference type="PIRSF" id="PIRSF029827">
    <property type="entry name" value="Fe_traffic_YggX"/>
    <property type="match status" value="1"/>
</dbReference>
<dbReference type="SUPFAM" id="SSF111148">
    <property type="entry name" value="YggX-like"/>
    <property type="match status" value="1"/>
</dbReference>
<reference key="1">
    <citation type="submission" date="2006-08" db="EMBL/GenBank/DDBJ databases">
        <title>Complete sequence of Alkalilimnicola ehrilichei MLHE-1.</title>
        <authorList>
            <person name="Copeland A."/>
            <person name="Lucas S."/>
            <person name="Lapidus A."/>
            <person name="Barry K."/>
            <person name="Detter J.C."/>
            <person name="Glavina del Rio T."/>
            <person name="Hammon N."/>
            <person name="Israni S."/>
            <person name="Dalin E."/>
            <person name="Tice H."/>
            <person name="Pitluck S."/>
            <person name="Sims D."/>
            <person name="Brettin T."/>
            <person name="Bruce D."/>
            <person name="Han C."/>
            <person name="Tapia R."/>
            <person name="Gilna P."/>
            <person name="Schmutz J."/>
            <person name="Larimer F."/>
            <person name="Land M."/>
            <person name="Hauser L."/>
            <person name="Kyrpides N."/>
            <person name="Mikhailova N."/>
            <person name="Oremland R.S."/>
            <person name="Hoeft S.E."/>
            <person name="Switzer-Blum J."/>
            <person name="Kulp T."/>
            <person name="King G."/>
            <person name="Tabita R."/>
            <person name="Witte B."/>
            <person name="Santini J.M."/>
            <person name="Basu P."/>
            <person name="Hollibaugh J.T."/>
            <person name="Xie G."/>
            <person name="Stolz J.F."/>
            <person name="Richardson P."/>
        </authorList>
    </citation>
    <scope>NUCLEOTIDE SEQUENCE [LARGE SCALE GENOMIC DNA]</scope>
    <source>
        <strain>ATCC BAA-1101 / DSM 17681 / MLHE-1</strain>
    </source>
</reference>
<sequence>MTRMVQCVRLGREAEGLPRPPYPGELGKRIYENVSKEAWQEWLRHQTMLINEYRLTPVEPRARQFLEKEMENFFFGDGSSAPPDYQPE</sequence>
<name>FETP_ALKEH</name>
<organism>
    <name type="scientific">Alkalilimnicola ehrlichii (strain ATCC BAA-1101 / DSM 17681 / MLHE-1)</name>
    <dbReference type="NCBI Taxonomy" id="187272"/>
    <lineage>
        <taxon>Bacteria</taxon>
        <taxon>Pseudomonadati</taxon>
        <taxon>Pseudomonadota</taxon>
        <taxon>Gammaproteobacteria</taxon>
        <taxon>Chromatiales</taxon>
        <taxon>Ectothiorhodospiraceae</taxon>
        <taxon>Alkalilimnicola</taxon>
    </lineage>
</organism>
<proteinExistence type="inferred from homology"/>
<gene>
    <name type="ordered locus">Mlg_2696</name>
</gene>